<accession>Q5E750</accession>
<dbReference type="EC" id="4.2.2.n1" evidence="1"/>
<dbReference type="EMBL" id="CP000020">
    <property type="protein sequence ID" value="AAW85146.2"/>
    <property type="molecule type" value="Genomic_DNA"/>
</dbReference>
<dbReference type="RefSeq" id="WP_011261381.1">
    <property type="nucleotide sequence ID" value="NC_006840.2"/>
</dbReference>
<dbReference type="RefSeq" id="YP_204034.2">
    <property type="nucleotide sequence ID" value="NC_006840.2"/>
</dbReference>
<dbReference type="SMR" id="Q5E750"/>
<dbReference type="STRING" id="312309.VF_0651"/>
<dbReference type="CAZy" id="GH23">
    <property type="family name" value="Glycoside Hydrolase Family 23"/>
</dbReference>
<dbReference type="EnsemblBacteria" id="AAW85146">
    <property type="protein sequence ID" value="AAW85146"/>
    <property type="gene ID" value="VF_0651"/>
</dbReference>
<dbReference type="GeneID" id="54163306"/>
<dbReference type="KEGG" id="vfi:VF_0651"/>
<dbReference type="PATRIC" id="fig|312309.11.peg.644"/>
<dbReference type="eggNOG" id="COG4623">
    <property type="taxonomic scope" value="Bacteria"/>
</dbReference>
<dbReference type="HOGENOM" id="CLU_027494_0_1_6"/>
<dbReference type="OrthoDB" id="9815002at2"/>
<dbReference type="Proteomes" id="UP000000537">
    <property type="component" value="Chromosome I"/>
</dbReference>
<dbReference type="GO" id="GO:0009279">
    <property type="term" value="C:cell outer membrane"/>
    <property type="evidence" value="ECO:0007669"/>
    <property type="project" value="UniProtKB-SubCell"/>
</dbReference>
<dbReference type="GO" id="GO:0008933">
    <property type="term" value="F:peptidoglycan lytic transglycosylase activity"/>
    <property type="evidence" value="ECO:0007669"/>
    <property type="project" value="UniProtKB-UniRule"/>
</dbReference>
<dbReference type="GO" id="GO:0016998">
    <property type="term" value="P:cell wall macromolecule catabolic process"/>
    <property type="evidence" value="ECO:0007669"/>
    <property type="project" value="UniProtKB-UniRule"/>
</dbReference>
<dbReference type="GO" id="GO:0071555">
    <property type="term" value="P:cell wall organization"/>
    <property type="evidence" value="ECO:0007669"/>
    <property type="project" value="UniProtKB-KW"/>
</dbReference>
<dbReference type="GO" id="GO:0009253">
    <property type="term" value="P:peptidoglycan catabolic process"/>
    <property type="evidence" value="ECO:0007669"/>
    <property type="project" value="TreeGrafter"/>
</dbReference>
<dbReference type="CDD" id="cd13403">
    <property type="entry name" value="MLTF-like"/>
    <property type="match status" value="1"/>
</dbReference>
<dbReference type="CDD" id="cd01009">
    <property type="entry name" value="PBP2_YfhD_N"/>
    <property type="match status" value="1"/>
</dbReference>
<dbReference type="FunFam" id="1.10.530.10:FF:000003">
    <property type="entry name" value="Membrane-bound lytic murein transglycosylase F"/>
    <property type="match status" value="1"/>
</dbReference>
<dbReference type="Gene3D" id="1.10.530.10">
    <property type="match status" value="1"/>
</dbReference>
<dbReference type="Gene3D" id="3.40.190.10">
    <property type="entry name" value="Periplasmic binding protein-like II"/>
    <property type="match status" value="2"/>
</dbReference>
<dbReference type="HAMAP" id="MF_02016">
    <property type="entry name" value="MltF"/>
    <property type="match status" value="1"/>
</dbReference>
<dbReference type="InterPro" id="IPR023346">
    <property type="entry name" value="Lysozyme-like_dom_sf"/>
</dbReference>
<dbReference type="InterPro" id="IPR023703">
    <property type="entry name" value="MltF"/>
</dbReference>
<dbReference type="InterPro" id="IPR001638">
    <property type="entry name" value="Solute-binding_3/MltF_N"/>
</dbReference>
<dbReference type="InterPro" id="IPR000189">
    <property type="entry name" value="Transglyc_AS"/>
</dbReference>
<dbReference type="InterPro" id="IPR008258">
    <property type="entry name" value="Transglycosylase_SLT_dom_1"/>
</dbReference>
<dbReference type="NCBIfam" id="NF008112">
    <property type="entry name" value="PRK10859.1"/>
    <property type="match status" value="1"/>
</dbReference>
<dbReference type="PANTHER" id="PTHR35936">
    <property type="entry name" value="MEMBRANE-BOUND LYTIC MUREIN TRANSGLYCOSYLASE F"/>
    <property type="match status" value="1"/>
</dbReference>
<dbReference type="PANTHER" id="PTHR35936:SF32">
    <property type="entry name" value="MEMBRANE-BOUND LYTIC MUREIN TRANSGLYCOSYLASE F"/>
    <property type="match status" value="1"/>
</dbReference>
<dbReference type="Pfam" id="PF00497">
    <property type="entry name" value="SBP_bac_3"/>
    <property type="match status" value="1"/>
</dbReference>
<dbReference type="Pfam" id="PF01464">
    <property type="entry name" value="SLT"/>
    <property type="match status" value="1"/>
</dbReference>
<dbReference type="SMART" id="SM00062">
    <property type="entry name" value="PBPb"/>
    <property type="match status" value="1"/>
</dbReference>
<dbReference type="SUPFAM" id="SSF53955">
    <property type="entry name" value="Lysozyme-like"/>
    <property type="match status" value="1"/>
</dbReference>
<dbReference type="SUPFAM" id="SSF53850">
    <property type="entry name" value="Periplasmic binding protein-like II"/>
    <property type="match status" value="1"/>
</dbReference>
<dbReference type="PROSITE" id="PS51257">
    <property type="entry name" value="PROKAR_LIPOPROTEIN"/>
    <property type="match status" value="1"/>
</dbReference>
<dbReference type="PROSITE" id="PS00922">
    <property type="entry name" value="TRANSGLYCOSYLASE"/>
    <property type="match status" value="1"/>
</dbReference>
<protein>
    <recommendedName>
        <fullName evidence="1">Membrane-bound lytic murein transglycosylase F</fullName>
        <ecNumber evidence="1">4.2.2.n1</ecNumber>
    </recommendedName>
    <alternativeName>
        <fullName evidence="1">Murein lyase F</fullName>
    </alternativeName>
</protein>
<sequence>MSRIRHHRFIQSCLVISTLLITLTGCQVESEPKTKLEQIRERGILRVSTLNNQLSYYIGSNGPTGLDYDLAKAFAEKLEVKLEITPAYTYSGLFPALERNEVDIIAANMTITPERLQKFRPGPVYYYVSQQVVYKKGSWRPRNIKNLTQLDENLTIVKDSSFEGTLIKLKEKYPNLDWNTAADTDVSELLKKVATGEIHYTLADSVELSLTQRIHPDLAVAFEVTEDQPVAWFLQQTEDDSLQALLIEFFGELKESGKLALLEEKYFGHVESFDYVDTRAFIRALESKLPKWEPLFKKYAGDFDWRFLAALSYQESHWNPLAKSPTGVRGMMMLTLPTAQSVGVKNRLNPEQSIRGGAEYLRRIVKRVPDSITEHEKIWFALASYNIGFGHMMDARRLTQRLGGDPDSWTDVKDNLPLLRQQRYYRYLRYGFARGDEAQNYVENIRRYYQSIIGYEQEQANKLKQEELTVEDLQVIDVPLSSAEASVSQAIETKK</sequence>
<proteinExistence type="inferred from homology"/>
<organism>
    <name type="scientific">Aliivibrio fischeri (strain ATCC 700601 / ES114)</name>
    <name type="common">Vibrio fischeri</name>
    <dbReference type="NCBI Taxonomy" id="312309"/>
    <lineage>
        <taxon>Bacteria</taxon>
        <taxon>Pseudomonadati</taxon>
        <taxon>Pseudomonadota</taxon>
        <taxon>Gammaproteobacteria</taxon>
        <taxon>Vibrionales</taxon>
        <taxon>Vibrionaceae</taxon>
        <taxon>Aliivibrio</taxon>
    </lineage>
</organism>
<name>MLTF_ALIF1</name>
<evidence type="ECO:0000255" key="1">
    <source>
        <dbReference type="HAMAP-Rule" id="MF_02016"/>
    </source>
</evidence>
<reference key="1">
    <citation type="journal article" date="2005" name="Proc. Natl. Acad. Sci. U.S.A.">
        <title>Complete genome sequence of Vibrio fischeri: a symbiotic bacterium with pathogenic congeners.</title>
        <authorList>
            <person name="Ruby E.G."/>
            <person name="Urbanowski M."/>
            <person name="Campbell J."/>
            <person name="Dunn A."/>
            <person name="Faini M."/>
            <person name="Gunsalus R."/>
            <person name="Lostroh P."/>
            <person name="Lupp C."/>
            <person name="McCann J."/>
            <person name="Millikan D."/>
            <person name="Schaefer A."/>
            <person name="Stabb E."/>
            <person name="Stevens A."/>
            <person name="Visick K."/>
            <person name="Whistler C."/>
            <person name="Greenberg E.P."/>
        </authorList>
    </citation>
    <scope>NUCLEOTIDE SEQUENCE [LARGE SCALE GENOMIC DNA]</scope>
    <source>
        <strain>ATCC 700601 / ES114</strain>
    </source>
</reference>
<reference key="2">
    <citation type="journal article" date="2008" name="BMC Genomics">
        <title>Comparative genomics-based investigation of resequencing targets in Vibrio fischeri: focus on point miscalls and artefactual expansions.</title>
        <authorList>
            <person name="Mandel M.J."/>
            <person name="Stabb E.V."/>
            <person name="Ruby E.G."/>
        </authorList>
    </citation>
    <scope>SEQUENCE REVISION</scope>
</reference>
<comment type="function">
    <text evidence="1">Murein-degrading enzyme that degrades murein glycan strands and insoluble, high-molecular weight murein sacculi, with the concomitant formation of a 1,6-anhydromuramoyl product. Lytic transglycosylases (LTs) play an integral role in the metabolism of the peptidoglycan (PG) sacculus. Their lytic action creates space within the PG sacculus to allow for its expansion as well as for the insertion of various structures such as secretion systems and flagella.</text>
</comment>
<comment type="catalytic activity">
    <reaction evidence="1">
        <text>Exolytic cleavage of the (1-&gt;4)-beta-glycosidic linkage between N-acetylmuramic acid (MurNAc) and N-acetylglucosamine (GlcNAc) residues in peptidoglycan, from either the reducing or the non-reducing ends of the peptidoglycan chains, with concomitant formation of a 1,6-anhydrobond in the MurNAc residue.</text>
        <dbReference type="EC" id="4.2.2.n1"/>
    </reaction>
</comment>
<comment type="subcellular location">
    <subcellularLocation>
        <location>Cell outer membrane</location>
        <topology>Peripheral membrane protein</topology>
    </subcellularLocation>
    <text evidence="1">Attached to the inner leaflet of the outer membrane.</text>
</comment>
<comment type="domain">
    <text evidence="1">The N-terminal domain does not have lytic activity and probably modulates enzymatic activity. The C-terminal domain is the catalytic active domain.</text>
</comment>
<comment type="similarity">
    <text evidence="1">In the N-terminal section; belongs to the bacterial solute-binding protein 3 family.</text>
</comment>
<comment type="similarity">
    <text evidence="1">In the C-terminal section; belongs to the transglycosylase Slt family.</text>
</comment>
<keyword id="KW-0998">Cell outer membrane</keyword>
<keyword id="KW-0961">Cell wall biogenesis/degradation</keyword>
<keyword id="KW-0456">Lyase</keyword>
<keyword id="KW-0472">Membrane</keyword>
<keyword id="KW-1185">Reference proteome</keyword>
<keyword id="KW-0732">Signal</keyword>
<feature type="signal peptide" evidence="1">
    <location>
        <begin position="1"/>
        <end position="30"/>
    </location>
</feature>
<feature type="chain" id="PRO_0000353991" description="Membrane-bound lytic murein transglycosylase F">
    <location>
        <begin position="31"/>
        <end position="495"/>
    </location>
</feature>
<feature type="region of interest" description="Non-LT domain" evidence="1">
    <location>
        <begin position="31"/>
        <end position="270"/>
    </location>
</feature>
<feature type="region of interest" description="LT domain" evidence="1">
    <location>
        <begin position="272"/>
        <end position="495"/>
    </location>
</feature>
<feature type="active site" evidence="1">
    <location>
        <position position="315"/>
    </location>
</feature>
<gene>
    <name evidence="1" type="primary">mltF</name>
    <name type="ordered locus">VF_0651</name>
</gene>